<organism>
    <name type="scientific">Paraburkholderia xenovorans (strain LB400)</name>
    <dbReference type="NCBI Taxonomy" id="266265"/>
    <lineage>
        <taxon>Bacteria</taxon>
        <taxon>Pseudomonadati</taxon>
        <taxon>Pseudomonadota</taxon>
        <taxon>Betaproteobacteria</taxon>
        <taxon>Burkholderiales</taxon>
        <taxon>Burkholderiaceae</taxon>
        <taxon>Paraburkholderia</taxon>
    </lineage>
</organism>
<evidence type="ECO:0000255" key="1">
    <source>
        <dbReference type="HAMAP-Rule" id="MF_00362"/>
    </source>
</evidence>
<evidence type="ECO:0000305" key="2"/>
<protein>
    <recommendedName>
        <fullName evidence="1">Large ribosomal subunit protein uL10</fullName>
    </recommendedName>
    <alternativeName>
        <fullName evidence="2">50S ribosomal protein L10</fullName>
    </alternativeName>
</protein>
<keyword id="KW-1185">Reference proteome</keyword>
<keyword id="KW-0687">Ribonucleoprotein</keyword>
<keyword id="KW-0689">Ribosomal protein</keyword>
<keyword id="KW-0694">RNA-binding</keyword>
<keyword id="KW-0699">rRNA-binding</keyword>
<name>RL10_PARXL</name>
<proteinExistence type="inferred from homology"/>
<comment type="function">
    <text evidence="1">Forms part of the ribosomal stalk, playing a central role in the interaction of the ribosome with GTP-bound translation factors.</text>
</comment>
<comment type="subunit">
    <text evidence="1">Part of the ribosomal stalk of the 50S ribosomal subunit. The N-terminus interacts with L11 and the large rRNA to form the base of the stalk. The C-terminus forms an elongated spine to which L12 dimers bind in a sequential fashion forming a multimeric L10(L12)X complex.</text>
</comment>
<comment type="similarity">
    <text evidence="1">Belongs to the universal ribosomal protein uL10 family.</text>
</comment>
<feature type="chain" id="PRO_1000005478" description="Large ribosomal subunit protein uL10">
    <location>
        <begin position="1"/>
        <end position="167"/>
    </location>
</feature>
<gene>
    <name evidence="1" type="primary">rplJ</name>
    <name type="ordered locus">Bxeno_A4091</name>
    <name type="ORF">Bxe_A0304</name>
</gene>
<accession>Q13TG0</accession>
<reference key="1">
    <citation type="journal article" date="2006" name="Proc. Natl. Acad. Sci. U.S.A.">
        <title>Burkholderia xenovorans LB400 harbors a multi-replicon, 9.73-Mbp genome shaped for versatility.</title>
        <authorList>
            <person name="Chain P.S.G."/>
            <person name="Denef V.J."/>
            <person name="Konstantinidis K.T."/>
            <person name="Vergez L.M."/>
            <person name="Agullo L."/>
            <person name="Reyes V.L."/>
            <person name="Hauser L."/>
            <person name="Cordova M."/>
            <person name="Gomez L."/>
            <person name="Gonzalez M."/>
            <person name="Land M."/>
            <person name="Lao V."/>
            <person name="Larimer F."/>
            <person name="LiPuma J.J."/>
            <person name="Mahenthiralingam E."/>
            <person name="Malfatti S.A."/>
            <person name="Marx C.J."/>
            <person name="Parnell J.J."/>
            <person name="Ramette A."/>
            <person name="Richardson P."/>
            <person name="Seeger M."/>
            <person name="Smith D."/>
            <person name="Spilker T."/>
            <person name="Sul W.J."/>
            <person name="Tsoi T.V."/>
            <person name="Ulrich L.E."/>
            <person name="Zhulin I.B."/>
            <person name="Tiedje J.M."/>
        </authorList>
    </citation>
    <scope>NUCLEOTIDE SEQUENCE [LARGE SCALE GENOMIC DNA]</scope>
    <source>
        <strain>LB400</strain>
    </source>
</reference>
<dbReference type="EMBL" id="CP000270">
    <property type="protein sequence ID" value="ABE32629.1"/>
    <property type="molecule type" value="Genomic_DNA"/>
</dbReference>
<dbReference type="RefSeq" id="WP_007180144.1">
    <property type="nucleotide sequence ID" value="NZ_CP008760.1"/>
</dbReference>
<dbReference type="SMR" id="Q13TG0"/>
<dbReference type="STRING" id="266265.Bxe_A0304"/>
<dbReference type="GeneID" id="97311155"/>
<dbReference type="KEGG" id="bxb:DR64_2474"/>
<dbReference type="KEGG" id="bxe:Bxe_A0304"/>
<dbReference type="eggNOG" id="COG0244">
    <property type="taxonomic scope" value="Bacteria"/>
</dbReference>
<dbReference type="OrthoDB" id="9808307at2"/>
<dbReference type="Proteomes" id="UP000001817">
    <property type="component" value="Chromosome 1"/>
</dbReference>
<dbReference type="GO" id="GO:1990904">
    <property type="term" value="C:ribonucleoprotein complex"/>
    <property type="evidence" value="ECO:0007669"/>
    <property type="project" value="UniProtKB-KW"/>
</dbReference>
<dbReference type="GO" id="GO:0005840">
    <property type="term" value="C:ribosome"/>
    <property type="evidence" value="ECO:0007669"/>
    <property type="project" value="UniProtKB-KW"/>
</dbReference>
<dbReference type="GO" id="GO:0070180">
    <property type="term" value="F:large ribosomal subunit rRNA binding"/>
    <property type="evidence" value="ECO:0007669"/>
    <property type="project" value="UniProtKB-UniRule"/>
</dbReference>
<dbReference type="GO" id="GO:0006412">
    <property type="term" value="P:translation"/>
    <property type="evidence" value="ECO:0007669"/>
    <property type="project" value="UniProtKB-UniRule"/>
</dbReference>
<dbReference type="CDD" id="cd05797">
    <property type="entry name" value="Ribosomal_L10"/>
    <property type="match status" value="1"/>
</dbReference>
<dbReference type="Gene3D" id="3.30.70.1730">
    <property type="match status" value="1"/>
</dbReference>
<dbReference type="Gene3D" id="6.10.250.290">
    <property type="match status" value="1"/>
</dbReference>
<dbReference type="HAMAP" id="MF_00362">
    <property type="entry name" value="Ribosomal_uL10"/>
    <property type="match status" value="1"/>
</dbReference>
<dbReference type="InterPro" id="IPR001790">
    <property type="entry name" value="Ribosomal_uL10"/>
</dbReference>
<dbReference type="InterPro" id="IPR043141">
    <property type="entry name" value="Ribosomal_uL10-like_sf"/>
</dbReference>
<dbReference type="InterPro" id="IPR022973">
    <property type="entry name" value="Ribosomal_uL10_bac"/>
</dbReference>
<dbReference type="InterPro" id="IPR047865">
    <property type="entry name" value="Ribosomal_uL10_bac_type"/>
</dbReference>
<dbReference type="NCBIfam" id="NF000955">
    <property type="entry name" value="PRK00099.1-1"/>
    <property type="match status" value="1"/>
</dbReference>
<dbReference type="PANTHER" id="PTHR11560">
    <property type="entry name" value="39S RIBOSOMAL PROTEIN L10, MITOCHONDRIAL"/>
    <property type="match status" value="1"/>
</dbReference>
<dbReference type="Pfam" id="PF00466">
    <property type="entry name" value="Ribosomal_L10"/>
    <property type="match status" value="1"/>
</dbReference>
<dbReference type="SUPFAM" id="SSF160369">
    <property type="entry name" value="Ribosomal protein L10-like"/>
    <property type="match status" value="1"/>
</dbReference>
<sequence length="167" mass="17825">MPLNKESKQAVVAEVAAQVAKAQTVVLAEYRGIAVGDLTKLRAKAREQQVYLRVLKNTLARRAVEGTPFAPLAEQMTGPLIYGISEDAIAAAKVVNDFGKTNDKLIIKAGSYEGKVMDKAGVQALANIPSREELLSKLLYVMQAPVSGFARALAALAEKKQGEETAA</sequence>